<gene>
    <name evidence="14" type="primary">H2ac20</name>
    <name type="synonym">Hist2h2ab</name>
    <name evidence="14" type="synonym">Hist2h2ac</name>
</gene>
<comment type="function">
    <text>Core component of nucleosome. Nucleosomes wrap and compact DNA into chromatin, limiting DNA accessibility to the cellular machineries which require DNA as a template. Histones thereby play a central role in transcription regulation, DNA repair, DNA replication and chromosomal stability. DNA accessibility is regulated via a complex set of post-translational modifications of histones, also called histone code, and nucleosome remodeling.</text>
</comment>
<comment type="subunit">
    <text>The nucleosome is a histone octamer containing two molecules each of H2A, H2B, H3 and H4 assembled in one H3-H4 heterotetramer and two H2A-H2B heterodimers. The octamer wraps approximately 147 bp of DNA.</text>
</comment>
<comment type="subcellular location">
    <subcellularLocation>
        <location>Nucleus</location>
    </subcellularLocation>
    <subcellularLocation>
        <location>Chromosome</location>
    </subcellularLocation>
</comment>
<comment type="PTM">
    <text evidence="2">Deiminated on Arg-4 in granulocytes upon calcium entry.</text>
</comment>
<comment type="PTM">
    <text evidence="2 5 6 9">Monoubiquitination of Lys-120 (H2AK119Ub) by RING1, TRIM37 and RNF2/RING2 complex gives a specific tag for epigenetic transcriptional repression and participates in X chromosome inactivation of female mammals. It is involved in the initiation of both imprinted and random X inactivation. Ubiquitinated H2A is enriched in inactive X chromosome chromatin. Ubiquitination of H2A functions downstream of methylation of 'Lys-27' of histone H3 (H3K27me). H2AK119Ub by RNF2/RING2 can also be induced by ultraviolet and may be involved in DNA repair. Following DNA double-strand breaks (DSBs), it is ubiquitinated through 'Lys-63' linkage of ubiquitin moieties by the E2 ligase UBE2N and the E3 ligases RNF8 and RNF168, leading to the recruitment of repair proteins to sites of DNA damage. Ubiquitination at Lys-14 and Lys-16 (H2AK13Ub and H2AK15Ub, respectively) in response to DNA damage is initiated by RNF168 that mediates monoubiquitination at these 2 sites, and 'Lys-63'-linked ubiquitin are then conjugated to monoubiquitin; RNF8 is able to extend 'Lys-63'-linked ubiquitin chains in vitro. Deubiquitinated by USP51 at Lys-14 and Lys-16 (H2AK13Ub and H2AK15Ub, respectively) after damaged DNA is repaired (By similarity). H2AK119Ub and ionizing radiation-induced 'Lys-63'-linked ubiquitination (H2AK13Ub and H2AK15Ub) are distinct events.</text>
</comment>
<comment type="PTM">
    <text evidence="2">Phosphorylation on Ser-2 (H2AS1ph) is enhanced during mitosis. Phosphorylation on Ser-2 by RPS6KA5/MSK1 directly represses transcription. Acetylation of H3 inhibits Ser-2 phosphorylation by RPS6KA5/MSK1. Phosphorylation at Thr-121 (H2AT120ph) by DCAF1 is present in the regulatory region of many tumor suppresor genes and down-regulates their transcription.</text>
</comment>
<comment type="PTM">
    <text evidence="7">Symmetric dimethylation on Arg-4 by the PRDM1/PRMT5 complex may play a crucial role in the germ-cell lineage.</text>
</comment>
<comment type="PTM">
    <text evidence="9">Glutamine methylation at Gln-105 (H2AQ104me) by FBL is specifically dedicated to polymerase I. It is present at 35S ribosomal DNA locus and impairs binding of the FACT complex.</text>
</comment>
<comment type="PTM">
    <text evidence="8">Crotonylation (Kcr) is specifically present in male germ cells and marks testis-specific genes in post-meiotic cells, including X-linked genes that escape sex chromosome inactivation in haploid cells. Crotonylation marks active promoters and enhancers and confers resistance to transcriptional repressors. It is also associated with post-meiotically activated genes on autosomes.</text>
</comment>
<comment type="PTM">
    <text evidence="11">Hydroxybutyrylation of histones is induced by starvation.</text>
</comment>
<comment type="PTM">
    <text evidence="1">Lactylated in macrophages by EP300/P300 by using lactoyl-CoA directly derived from endogenous or exogenous lactate, leading to stimulates gene transcription.</text>
</comment>
<comment type="similarity">
    <text evidence="12">Belongs to the histone H2A family.</text>
</comment>
<evidence type="ECO:0000250" key="1">
    <source>
        <dbReference type="UniProtKB" id="P0C0S5"/>
    </source>
</evidence>
<evidence type="ECO:0000250" key="2">
    <source>
        <dbReference type="UniProtKB" id="P0C0S8"/>
    </source>
</evidence>
<evidence type="ECO:0000250" key="3">
    <source>
        <dbReference type="UniProtKB" id="Q16777"/>
    </source>
</evidence>
<evidence type="ECO:0000256" key="4">
    <source>
        <dbReference type="SAM" id="MobiDB-lite"/>
    </source>
</evidence>
<evidence type="ECO:0000269" key="5">
    <source>
    </source>
</evidence>
<evidence type="ECO:0000269" key="6">
    <source>
    </source>
</evidence>
<evidence type="ECO:0000269" key="7">
    <source>
    </source>
</evidence>
<evidence type="ECO:0000269" key="8">
    <source>
    </source>
</evidence>
<evidence type="ECO:0000269" key="9">
    <source>
    </source>
</evidence>
<evidence type="ECO:0000269" key="10">
    <source>
    </source>
</evidence>
<evidence type="ECO:0000269" key="11">
    <source>
    </source>
</evidence>
<evidence type="ECO:0000305" key="12"/>
<evidence type="ECO:0000305" key="13">
    <source>
    </source>
</evidence>
<evidence type="ECO:0000312" key="14">
    <source>
        <dbReference type="MGI" id="MGI:2448316"/>
    </source>
</evidence>
<reference key="1">
    <citation type="journal article" date="1996" name="Genome Res.">
        <title>Characterization of the 55-kb mouse histone gene cluster on chromosome 3.</title>
        <authorList>
            <person name="Wang Z.-F."/>
            <person name="Tisovec R."/>
            <person name="Debry R.W."/>
            <person name="Frey M.R."/>
            <person name="Matera A.G."/>
            <person name="Marzluff W.F."/>
        </authorList>
    </citation>
    <scope>NUCLEOTIDE SEQUENCE [GENOMIC DNA]</scope>
    <source>
        <strain>129</strain>
    </source>
</reference>
<reference key="2">
    <citation type="journal article" date="2002" name="Genomics">
        <title>The human and mouse replication-dependent histone genes.</title>
        <authorList>
            <person name="Marzluff W.F."/>
            <person name="Gongidi P."/>
            <person name="Woods K.R."/>
            <person name="Jin J."/>
            <person name="Maltais L.J."/>
        </authorList>
    </citation>
    <scope>NUCLEOTIDE SEQUENCE [GENOMIC DNA]</scope>
</reference>
<reference key="3">
    <citation type="journal article" date="2004" name="Dev. Cell">
        <title>Polycomb group proteins Ring1A/B link ubiquitylation of histone H2A to heritable gene silencing and X inactivation.</title>
        <authorList>
            <person name="de Napoles M."/>
            <person name="Mermoud J.E."/>
            <person name="Wakao R."/>
            <person name="Tang Y.A."/>
            <person name="Endoh M."/>
            <person name="Appanah R."/>
            <person name="Nesterova T.B."/>
            <person name="Silva J."/>
            <person name="Otte A.P."/>
            <person name="Vidal M."/>
            <person name="Koseki H."/>
            <person name="Brockdorff N."/>
        </authorList>
    </citation>
    <scope>UBIQUITINATION AT LYS-120</scope>
</reference>
<reference key="4">
    <citation type="journal article" date="2004" name="J. Biol. Chem.">
        <title>Ring1b-mediated H2A ubiquitination associates with inactive X chromosomes and is involved in initiation of X inactivation.</title>
        <authorList>
            <person name="Fang J."/>
            <person name="Chen T."/>
            <person name="Chadwick B."/>
            <person name="Li E."/>
            <person name="Zhang Y."/>
        </authorList>
    </citation>
    <scope>UBIQUITINATION AT LYS-120</scope>
</reference>
<reference key="5">
    <citation type="journal article" date="2006" name="Nat. Cell Biol.">
        <title>Blimp1 associates with Prmt5 and directs histone arginine methylation in mouse germ cells.</title>
        <authorList>
            <person name="Ancelin K."/>
            <person name="Lange U.C."/>
            <person name="Hajkova P."/>
            <person name="Schneider R."/>
            <person name="Bannister A.J."/>
            <person name="Kouzarides T."/>
            <person name="Surani M.A."/>
        </authorList>
    </citation>
    <scope>METHYLATION AT ARG-4</scope>
</reference>
<reference key="6">
    <citation type="journal article" date="2011" name="Cell">
        <title>Identification of 67 histone marks and histone lysine crotonylation as a new type of histone modification.</title>
        <authorList>
            <person name="Tan M."/>
            <person name="Luo H."/>
            <person name="Lee S."/>
            <person name="Jin F."/>
            <person name="Yang J.S."/>
            <person name="Montellier E."/>
            <person name="Buchou T."/>
            <person name="Cheng Z."/>
            <person name="Rousseaux S."/>
            <person name="Rajagopal N."/>
            <person name="Lu Z."/>
            <person name="Ye Z."/>
            <person name="Zhu Q."/>
            <person name="Wysocka J."/>
            <person name="Ye Y."/>
            <person name="Khochbin S."/>
            <person name="Ren B."/>
            <person name="Zhao Y."/>
        </authorList>
    </citation>
    <scope>CROTONYLATION AT LYS-37 AND LYS-119</scope>
</reference>
<reference key="7">
    <citation type="journal article" date="2014" name="Nat. Chem. Biol.">
        <title>Lysine 2-hydroxyisobutyrylation is a widely distributed active histone mark.</title>
        <authorList>
            <person name="Dai L."/>
            <person name="Peng C."/>
            <person name="Montellier E."/>
            <person name="Lu Z."/>
            <person name="Chen Y."/>
            <person name="Ishii H."/>
            <person name="Debernardi A."/>
            <person name="Buchou T."/>
            <person name="Rousseaux S."/>
            <person name="Jin F."/>
            <person name="Sabari B.R."/>
            <person name="Deng Z."/>
            <person name="Allis C.D."/>
            <person name="Ren B."/>
            <person name="Khochbin S."/>
            <person name="Zhao Y."/>
        </authorList>
    </citation>
    <scope>HYDROXYBUTYRYLATION AT LYS-6; LYS-10; LYS-37; LYS-75; LYS-76; LYS-96 AND LYS-119</scope>
</reference>
<reference key="8">
    <citation type="journal article" date="2014" name="Nature">
        <title>Glutamine methylation in histone H2A is an RNA-polymerase-I-dedicated modification.</title>
        <authorList>
            <person name="Tessarz P."/>
            <person name="Santos-Rosa H."/>
            <person name="Robson S.C."/>
            <person name="Sylvestersen K.B."/>
            <person name="Nelson C.J."/>
            <person name="Nielsen M.L."/>
            <person name="Kouzarides T."/>
        </authorList>
    </citation>
    <scope>METHYLATION AT GLN-105</scope>
</reference>
<reference key="9">
    <citation type="journal article" date="2016" name="Mol. Cell">
        <title>Metabolic regulation of gene expression by histone lysine beta-hydroxybutyrylation.</title>
        <authorList>
            <person name="Xie Z."/>
            <person name="Zhang D."/>
            <person name="Chung D."/>
            <person name="Tang Z."/>
            <person name="Huang H."/>
            <person name="Dai L."/>
            <person name="Qi S."/>
            <person name="Li J."/>
            <person name="Colak G."/>
            <person name="Chen Y."/>
            <person name="Xia C."/>
            <person name="Peng C."/>
            <person name="Ruan H."/>
            <person name="Kirkey M."/>
            <person name="Wang D."/>
            <person name="Jensen L.M."/>
            <person name="Kwon O.K."/>
            <person name="Lee S."/>
            <person name="Pletcher S.D."/>
            <person name="Tan M."/>
            <person name="Lombard D.B."/>
            <person name="White K.P."/>
            <person name="Zhao H."/>
            <person name="Li J."/>
            <person name="Roeder R.G."/>
            <person name="Yang X."/>
            <person name="Zhao Y."/>
        </authorList>
    </citation>
    <scope>HYDROXYBUTYRYLATION AT LYS-6; LYS-37; LYS-120 AND LYS-125</scope>
</reference>
<feature type="initiator methionine" description="Removed" evidence="3">
    <location>
        <position position="1"/>
    </location>
</feature>
<feature type="chain" id="PRO_0000227512" description="Histone H2A type 2-C">
    <location>
        <begin position="2"/>
        <end position="129"/>
    </location>
</feature>
<feature type="region of interest" description="Disordered" evidence="4">
    <location>
        <begin position="1"/>
        <end position="22"/>
    </location>
</feature>
<feature type="compositionally biased region" description="Basic residues" evidence="4">
    <location>
        <begin position="7"/>
        <end position="19"/>
    </location>
</feature>
<feature type="modified residue" description="N-acetylserine" evidence="3">
    <location>
        <position position="2"/>
    </location>
</feature>
<feature type="modified residue" description="Phosphoserine; by RPS6KA5" evidence="2">
    <location>
        <position position="2"/>
    </location>
</feature>
<feature type="modified residue" description="Citrulline; alternate" evidence="2">
    <location>
        <position position="4"/>
    </location>
</feature>
<feature type="modified residue" description="Symmetric dimethylarginine; by PRMT5; alternate" evidence="13">
    <location>
        <position position="4"/>
    </location>
</feature>
<feature type="modified residue" description="N6-(2-hydroxyisobutyryl)lysine; alternate" evidence="10">
    <location>
        <position position="6"/>
    </location>
</feature>
<feature type="modified residue" description="N6-(beta-hydroxybutyryl)lysine; alternate" evidence="11">
    <location>
        <position position="6"/>
    </location>
</feature>
<feature type="modified residue" description="N6-acetyllysine; alternate" evidence="3">
    <location>
        <position position="6"/>
    </location>
</feature>
<feature type="modified residue" description="N6-(2-hydroxyisobutyryl)lysine; alternate" evidence="10">
    <location>
        <position position="10"/>
    </location>
</feature>
<feature type="modified residue" description="N6-lactoyllysine; alternate" evidence="1">
    <location>
        <position position="10"/>
    </location>
</feature>
<feature type="modified residue" description="N6-succinyllysine; alternate" evidence="3">
    <location>
        <position position="10"/>
    </location>
</feature>
<feature type="modified residue" description="N6-(2-hydroxyisobutyryl)lysine; alternate" evidence="10">
    <location>
        <position position="37"/>
    </location>
</feature>
<feature type="modified residue" description="N6-(beta-hydroxybutyryl)lysine; alternate" evidence="11">
    <location>
        <position position="37"/>
    </location>
</feature>
<feature type="modified residue" description="N6-crotonyllysine; alternate" evidence="8">
    <location>
        <position position="37"/>
    </location>
</feature>
<feature type="modified residue" description="N6-(2-hydroxyisobutyryl)lysine" evidence="10">
    <location>
        <position position="75"/>
    </location>
</feature>
<feature type="modified residue" description="N6-(2-hydroxyisobutyryl)lysine" evidence="10">
    <location>
        <position position="76"/>
    </location>
</feature>
<feature type="modified residue" description="N6-(2-hydroxyisobutyryl)lysine; alternate" evidence="10">
    <location>
        <position position="96"/>
    </location>
</feature>
<feature type="modified residue" description="N6-glutaryllysine; alternate" evidence="2">
    <location>
        <position position="96"/>
    </location>
</feature>
<feature type="modified residue" description="N6-succinyllysine; alternate" evidence="3">
    <location>
        <position position="96"/>
    </location>
</feature>
<feature type="modified residue" description="N6-glutaryllysine" evidence="2">
    <location>
        <position position="100"/>
    </location>
</feature>
<feature type="modified residue" description="N5-methylglutamine" evidence="9">
    <location>
        <position position="105"/>
    </location>
</feature>
<feature type="modified residue" description="N6-(2-hydroxyisobutyryl)lysine; alternate" evidence="10">
    <location>
        <position position="119"/>
    </location>
</feature>
<feature type="modified residue" description="N6-crotonyllysine; alternate" evidence="8">
    <location>
        <position position="119"/>
    </location>
</feature>
<feature type="modified residue" description="N6-glutaryllysine; alternate" evidence="2">
    <location>
        <position position="119"/>
    </location>
</feature>
<feature type="modified residue" description="N6-(beta-hydroxybutyryl)lysine; alternate" evidence="11">
    <location>
        <position position="120"/>
    </location>
</feature>
<feature type="modified residue" description="N6-crotonyllysine; alternate" evidence="2">
    <location>
        <position position="120"/>
    </location>
</feature>
<feature type="modified residue" description="N6-glutaryllysine; alternate" evidence="2">
    <location>
        <position position="120"/>
    </location>
</feature>
<feature type="modified residue" description="Phosphothreonine; by DCAF1" evidence="3">
    <location>
        <position position="121"/>
    </location>
</feature>
<feature type="modified residue" description="Phosphoserine" evidence="3">
    <location>
        <position position="123"/>
    </location>
</feature>
<feature type="modified residue" description="N6-(beta-hydroxybutyryl)lysine; alternate" evidence="11">
    <location>
        <position position="125"/>
    </location>
</feature>
<feature type="modified residue" description="N6-crotonyllysine; alternate" evidence="2">
    <location>
        <position position="125"/>
    </location>
</feature>
<feature type="cross-link" description="Glycyl lysine isopeptide (Lys-Gly) (interchain with G-Cter in ubiquitin)" evidence="3">
    <location>
        <position position="14"/>
    </location>
</feature>
<feature type="cross-link" description="Glycyl lysine isopeptide (Lys-Gly) (interchain with G-Cter in ubiquitin)" evidence="3">
    <location>
        <position position="16"/>
    </location>
</feature>
<feature type="cross-link" description="Glycyl lysine isopeptide (Lys-Gly) (interchain with G-Cter in ubiquitin); alternate" evidence="5 6">
    <location>
        <position position="120"/>
    </location>
</feature>
<name>H2A2C_MOUSE</name>
<sequence>MSGRGKQGGKARAKAKSRSSRAGLQFPVGRVHRLLRKGNYAERVGAGAPVYMAAVLEYLTAEILELAGNAARDNKKTRIIPRHLQLAIRNDEELNKLLGKVTIAQGGVLPNIQAVLLPKKTESHKAKSK</sequence>
<keyword id="KW-0007">Acetylation</keyword>
<keyword id="KW-0158">Chromosome</keyword>
<keyword id="KW-0164">Citrullination</keyword>
<keyword id="KW-0238">DNA-binding</keyword>
<keyword id="KW-0379">Hydroxylation</keyword>
<keyword id="KW-1017">Isopeptide bond</keyword>
<keyword id="KW-0488">Methylation</keyword>
<keyword id="KW-0544">Nucleosome core</keyword>
<keyword id="KW-0539">Nucleus</keyword>
<keyword id="KW-0597">Phosphoprotein</keyword>
<keyword id="KW-1185">Reference proteome</keyword>
<keyword id="KW-0832">Ubl conjugation</keyword>
<dbReference type="EMBL" id="U62673">
    <property type="protein sequence ID" value="AAB04768.1"/>
    <property type="molecule type" value="Genomic_DNA"/>
</dbReference>
<dbReference type="EMBL" id="AY158922">
    <property type="protein sequence ID" value="AAO06232.2"/>
    <property type="molecule type" value="Genomic_DNA"/>
</dbReference>
<dbReference type="EMBL" id="AY158923">
    <property type="protein sequence ID" value="AAO06233.1"/>
    <property type="molecule type" value="Genomic_DNA"/>
</dbReference>
<dbReference type="CCDS" id="CCDS17634.1"/>
<dbReference type="RefSeq" id="NP_783593.1">
    <property type="nucleotide sequence ID" value="NM_175662.3"/>
</dbReference>
<dbReference type="SMR" id="Q64523"/>
<dbReference type="BioGRID" id="235095">
    <property type="interactions" value="12"/>
</dbReference>
<dbReference type="FunCoup" id="Q64523">
    <property type="interactions" value="1659"/>
</dbReference>
<dbReference type="IntAct" id="Q64523">
    <property type="interactions" value="1"/>
</dbReference>
<dbReference type="STRING" id="10090.ENSMUSP00000088288"/>
<dbReference type="GlyGen" id="Q64523">
    <property type="glycosylation" value="1 site, 1 O-linked glycan (1 site)"/>
</dbReference>
<dbReference type="iPTMnet" id="Q64523"/>
<dbReference type="PhosphoSitePlus" id="Q64523"/>
<dbReference type="SwissPalm" id="Q64523"/>
<dbReference type="jPOST" id="Q64523"/>
<dbReference type="PaxDb" id="10090-ENSMUSP00000088288"/>
<dbReference type="Pumba" id="Q64523"/>
<dbReference type="TopDownProteomics" id="Q64523"/>
<dbReference type="Antibodypedia" id="34012">
    <property type="antibodies" value="150 antibodies from 19 providers"/>
</dbReference>
<dbReference type="DNASU" id="319176"/>
<dbReference type="Ensembl" id="ENSMUST00000090782.4">
    <property type="protein sequence ID" value="ENSMUSP00000088288.4"/>
    <property type="gene ID" value="ENSMUSG00000068855.4"/>
</dbReference>
<dbReference type="GeneID" id="319176"/>
<dbReference type="KEGG" id="mmu:319176"/>
<dbReference type="UCSC" id="uc008qmi.2">
    <property type="organism name" value="mouse"/>
</dbReference>
<dbReference type="AGR" id="MGI:2448316"/>
<dbReference type="CTD" id="8338"/>
<dbReference type="MGI" id="MGI:2448316">
    <property type="gene designation" value="H2ac20"/>
</dbReference>
<dbReference type="VEuPathDB" id="HostDB:ENSMUSG00000068855"/>
<dbReference type="eggNOG" id="KOG1756">
    <property type="taxonomic scope" value="Eukaryota"/>
</dbReference>
<dbReference type="GeneTree" id="ENSGT00940000153118"/>
<dbReference type="HOGENOM" id="CLU_062828_3_1_1"/>
<dbReference type="InParanoid" id="Q64523"/>
<dbReference type="OMA" id="ANEMFIN"/>
<dbReference type="OrthoDB" id="9608857at2759"/>
<dbReference type="PhylomeDB" id="Q64523"/>
<dbReference type="TreeFam" id="TF300137"/>
<dbReference type="Reactome" id="R-MMU-110330">
    <property type="pathway name" value="Recognition and association of DNA glycosylase with site containing an affected purine"/>
</dbReference>
<dbReference type="Reactome" id="R-MMU-110331">
    <property type="pathway name" value="Cleavage of the damaged purine"/>
</dbReference>
<dbReference type="Reactome" id="R-MMU-212300">
    <property type="pathway name" value="PRC2 methylates histones and DNA"/>
</dbReference>
<dbReference type="Reactome" id="R-MMU-2299718">
    <property type="pathway name" value="Condensation of Prophase Chromosomes"/>
</dbReference>
<dbReference type="Reactome" id="R-MMU-2559586">
    <property type="pathway name" value="DNA Damage/Telomere Stress Induced Senescence"/>
</dbReference>
<dbReference type="Reactome" id="R-MMU-3214815">
    <property type="pathway name" value="HDACs deacetylate histones"/>
</dbReference>
<dbReference type="Reactome" id="R-MMU-3214858">
    <property type="pathway name" value="RMTs methylate histone arginines"/>
</dbReference>
<dbReference type="Reactome" id="R-MMU-5689603">
    <property type="pathway name" value="UCH proteinases"/>
</dbReference>
<dbReference type="Reactome" id="R-MMU-5689880">
    <property type="pathway name" value="Ub-specific processing proteases"/>
</dbReference>
<dbReference type="Reactome" id="R-MMU-5689901">
    <property type="pathway name" value="Metalloprotease DUBs"/>
</dbReference>
<dbReference type="Reactome" id="R-MMU-606279">
    <property type="pathway name" value="Deposition of new CENPA-containing nucleosomes at the centromere"/>
</dbReference>
<dbReference type="Reactome" id="R-MMU-8936459">
    <property type="pathway name" value="RUNX1 regulates genes involved in megakaryocyte differentiation and platelet function"/>
</dbReference>
<dbReference type="Reactome" id="R-MMU-9670095">
    <property type="pathway name" value="Inhibition of DNA recombination at telomere"/>
</dbReference>
<dbReference type="Reactome" id="R-MMU-9841922">
    <property type="pathway name" value="MLL4 and MLL3 complexes regulate expression of PPARG target genes in adipogenesis and hepatic steatosis"/>
</dbReference>
<dbReference type="Reactome" id="R-MMU-9843940">
    <property type="pathway name" value="Regulation of endogenous retroelements by KRAB-ZFP proteins"/>
</dbReference>
<dbReference type="BioGRID-ORCS" id="319176">
    <property type="hits" value="8 hits in 55 CRISPR screens"/>
</dbReference>
<dbReference type="PRO" id="PR:Q64523"/>
<dbReference type="Proteomes" id="UP000000589">
    <property type="component" value="Chromosome 3"/>
</dbReference>
<dbReference type="RNAct" id="Q64523">
    <property type="molecule type" value="protein"/>
</dbReference>
<dbReference type="Bgee" id="ENSMUSG00000068855">
    <property type="expression patterns" value="Expressed in uterus and 59 other cell types or tissues"/>
</dbReference>
<dbReference type="ExpressionAtlas" id="Q64523">
    <property type="expression patterns" value="baseline and differential"/>
</dbReference>
<dbReference type="GO" id="GO:0000786">
    <property type="term" value="C:nucleosome"/>
    <property type="evidence" value="ECO:0007669"/>
    <property type="project" value="UniProtKB-KW"/>
</dbReference>
<dbReference type="GO" id="GO:0005634">
    <property type="term" value="C:nucleus"/>
    <property type="evidence" value="ECO:0007669"/>
    <property type="project" value="UniProtKB-SubCell"/>
</dbReference>
<dbReference type="GO" id="GO:0003677">
    <property type="term" value="F:DNA binding"/>
    <property type="evidence" value="ECO:0007669"/>
    <property type="project" value="UniProtKB-KW"/>
</dbReference>
<dbReference type="GO" id="GO:0046982">
    <property type="term" value="F:protein heterodimerization activity"/>
    <property type="evidence" value="ECO:0007669"/>
    <property type="project" value="InterPro"/>
</dbReference>
<dbReference type="GO" id="GO:0030527">
    <property type="term" value="F:structural constituent of chromatin"/>
    <property type="evidence" value="ECO:0007669"/>
    <property type="project" value="InterPro"/>
</dbReference>
<dbReference type="CDD" id="cd00074">
    <property type="entry name" value="HFD_H2A"/>
    <property type="match status" value="1"/>
</dbReference>
<dbReference type="FunFam" id="1.10.20.10:FF:000004">
    <property type="entry name" value="Histone H2A"/>
    <property type="match status" value="1"/>
</dbReference>
<dbReference type="Gene3D" id="1.10.20.10">
    <property type="entry name" value="Histone, subunit A"/>
    <property type="match status" value="1"/>
</dbReference>
<dbReference type="InterPro" id="IPR009072">
    <property type="entry name" value="Histone-fold"/>
</dbReference>
<dbReference type="InterPro" id="IPR002119">
    <property type="entry name" value="Histone_H2A"/>
</dbReference>
<dbReference type="InterPro" id="IPR007125">
    <property type="entry name" value="Histone_H2A/H2B/H3"/>
</dbReference>
<dbReference type="InterPro" id="IPR032454">
    <property type="entry name" value="Histone_H2A_C"/>
</dbReference>
<dbReference type="InterPro" id="IPR032458">
    <property type="entry name" value="Histone_H2A_CS"/>
</dbReference>
<dbReference type="PANTHER" id="PTHR23430">
    <property type="entry name" value="HISTONE H2A"/>
    <property type="match status" value="1"/>
</dbReference>
<dbReference type="Pfam" id="PF00125">
    <property type="entry name" value="Histone"/>
    <property type="match status" value="1"/>
</dbReference>
<dbReference type="Pfam" id="PF16211">
    <property type="entry name" value="Histone_H2A_C"/>
    <property type="match status" value="1"/>
</dbReference>
<dbReference type="PRINTS" id="PR00620">
    <property type="entry name" value="HISTONEH2A"/>
</dbReference>
<dbReference type="SMART" id="SM00414">
    <property type="entry name" value="H2A"/>
    <property type="match status" value="1"/>
</dbReference>
<dbReference type="SUPFAM" id="SSF47113">
    <property type="entry name" value="Histone-fold"/>
    <property type="match status" value="1"/>
</dbReference>
<dbReference type="PROSITE" id="PS00046">
    <property type="entry name" value="HISTONE_H2A"/>
    <property type="match status" value="1"/>
</dbReference>
<proteinExistence type="evidence at protein level"/>
<accession>Q64523</accession>
<accession>Q8CGP3</accession>
<organism>
    <name type="scientific">Mus musculus</name>
    <name type="common">Mouse</name>
    <dbReference type="NCBI Taxonomy" id="10090"/>
    <lineage>
        <taxon>Eukaryota</taxon>
        <taxon>Metazoa</taxon>
        <taxon>Chordata</taxon>
        <taxon>Craniata</taxon>
        <taxon>Vertebrata</taxon>
        <taxon>Euteleostomi</taxon>
        <taxon>Mammalia</taxon>
        <taxon>Eutheria</taxon>
        <taxon>Euarchontoglires</taxon>
        <taxon>Glires</taxon>
        <taxon>Rodentia</taxon>
        <taxon>Myomorpha</taxon>
        <taxon>Muroidea</taxon>
        <taxon>Muridae</taxon>
        <taxon>Murinae</taxon>
        <taxon>Mus</taxon>
        <taxon>Mus</taxon>
    </lineage>
</organism>
<protein>
    <recommendedName>
        <fullName>Histone H2A type 2-C</fullName>
    </recommendedName>
    <alternativeName>
        <fullName evidence="14">H2A-clustered histone 20</fullName>
    </alternativeName>
    <alternativeName>
        <fullName>H2a-613B</fullName>
    </alternativeName>
</protein>